<protein>
    <recommendedName>
        <fullName>MICOS complex subunit MIC60</fullName>
    </recommendedName>
    <alternativeName>
        <fullName>Cell proliferation-inducing gene 4/52 protein</fullName>
    </alternativeName>
    <alternativeName>
        <fullName>Mitochondrial inner membrane protein</fullName>
    </alternativeName>
    <alternativeName>
        <fullName>Mitofilin</fullName>
    </alternativeName>
    <alternativeName>
        <fullName>p87/89</fullName>
    </alternativeName>
</protein>
<gene>
    <name type="primary">IMMT</name>
    <name type="synonym">HMP</name>
    <name type="synonym">MIC60</name>
    <name type="synonym">MINOS2</name>
    <name type="ORF">PIG4</name>
    <name type="ORF">PIG52</name>
</gene>
<proteinExistence type="evidence at protein level"/>
<sequence>MLRACQLSGVTAAAQSCLCGKFVLRPLRPCRRYSTSGSSGLTTGKIAGAGLLFVGGGIGGTILYAKWDSHFRESVEKTIPYSDKLFEMVLGPAAYNVPLPKKSIQSGPLKISSVSEVMKESKQPASQLQKQKGDTPASATAPTEAAQIISAAGDTLSVPAPAVQPEESLKTDHPEIGEGKPTPALSEEASSSSIRERPPEEVAARLAQQEKQEQVKIESLAKSLEDALRQTASVTLQAIAAQNAAVQAVNAHSNILKAAMDNSEIAGEKKSAQWRTVEGALKERRKAVDEAADALLKAKEELEKMKSVIENAKKKEVAGAKPHITAAEGKLHNMIVDLDNVVKKVQAAQSEAKVVSQYHELVVQARDDFKRELDSITPEVLPGWKGMSVSDLADKLSTDDLNSLIAHAHRRIDQLNRELAEQKATEKQHITLALEKQKLEEKRAFDSAVAKALEHHRSEIQAEQDRKIEEVRDAMENEMRTQLRRQAAAHTDHLRDVLRVQEQELKSEFEQNLSEKLSEQELQFRRLSQEQVDNFTLDINTAYARLRGIEQAVQSHAVAEEEARKAHQLWLSVEALKYSMKTSSAETPTIPLGSAVEAIKANCSDNEFTQALTAAIPPESLTRGVYSEETLRARFYAVQKLARRVAMIDETRNSLYQYFLSYLQSLLLFPPQQLKPPPELCPEDINTFKLLSYASYCIEHGDLELAAKFVNQLKGESRRVAQDWLKEARMTLETKQIVEILTAYASAVGIGTTQVQPE</sequence>
<evidence type="ECO:0000250" key="1">
    <source>
        <dbReference type="UniProtKB" id="Q3KR86"/>
    </source>
</evidence>
<evidence type="ECO:0000250" key="2">
    <source>
        <dbReference type="UniProtKB" id="Q8CAQ8"/>
    </source>
</evidence>
<evidence type="ECO:0000255" key="3"/>
<evidence type="ECO:0000256" key="4">
    <source>
        <dbReference type="SAM" id="MobiDB-lite"/>
    </source>
</evidence>
<evidence type="ECO:0000269" key="5">
    <source>
    </source>
</evidence>
<evidence type="ECO:0000269" key="6">
    <source>
    </source>
</evidence>
<evidence type="ECO:0000269" key="7">
    <source>
    </source>
</evidence>
<evidence type="ECO:0000269" key="8">
    <source>
    </source>
</evidence>
<evidence type="ECO:0000269" key="9">
    <source>
    </source>
</evidence>
<evidence type="ECO:0000269" key="10">
    <source>
    </source>
</evidence>
<evidence type="ECO:0000269" key="11">
    <source>
    </source>
</evidence>
<evidence type="ECO:0000269" key="12">
    <source>
    </source>
</evidence>
<evidence type="ECO:0000269" key="13">
    <source>
    </source>
</evidence>
<evidence type="ECO:0000269" key="14">
    <source>
    </source>
</evidence>
<evidence type="ECO:0000269" key="15">
    <source>
    </source>
</evidence>
<evidence type="ECO:0000269" key="16">
    <source>
    </source>
</evidence>
<evidence type="ECO:0000269" key="17">
    <source>
    </source>
</evidence>
<evidence type="ECO:0000269" key="18">
    <source>
    </source>
</evidence>
<evidence type="ECO:0000303" key="19">
    <source>
    </source>
</evidence>
<evidence type="ECO:0000303" key="20">
    <source ref="5"/>
</evidence>
<evidence type="ECO:0000305" key="21"/>
<evidence type="ECO:0007744" key="22">
    <source>
    </source>
</evidence>
<evidence type="ECO:0007744" key="23">
    <source>
    </source>
</evidence>
<evidence type="ECO:0007744" key="24">
    <source>
    </source>
</evidence>
<evidence type="ECO:0007744" key="25">
    <source>
    </source>
</evidence>
<dbReference type="EMBL" id="D21091">
    <property type="protein sequence ID" value="BAA04653.1"/>
    <property type="molecule type" value="mRNA"/>
</dbReference>
<dbReference type="EMBL" id="D21092">
    <property type="protein sequence ID" value="BAA04654.1"/>
    <property type="molecule type" value="mRNA"/>
</dbReference>
<dbReference type="EMBL" id="D21093">
    <property type="protein sequence ID" value="BAA04655.1"/>
    <property type="molecule type" value="mRNA"/>
</dbReference>
<dbReference type="EMBL" id="D21094">
    <property type="protein sequence ID" value="BAA04656.1"/>
    <property type="molecule type" value="mRNA"/>
</dbReference>
<dbReference type="EMBL" id="L42572">
    <property type="protein sequence ID" value="AAA85336.1"/>
    <property type="molecule type" value="mRNA"/>
</dbReference>
<dbReference type="EMBL" id="CR456793">
    <property type="protein sequence ID" value="CAG33074.1"/>
    <property type="molecule type" value="mRNA"/>
</dbReference>
<dbReference type="EMBL" id="AK312251">
    <property type="protein sequence ID" value="BAG35183.1"/>
    <property type="molecule type" value="mRNA"/>
</dbReference>
<dbReference type="EMBL" id="AY232292">
    <property type="protein sequence ID" value="AAP69987.1"/>
    <property type="molecule type" value="mRNA"/>
</dbReference>
<dbReference type="EMBL" id="AY921637">
    <property type="protein sequence ID" value="AAX10024.1"/>
    <property type="molecule type" value="mRNA"/>
</dbReference>
<dbReference type="EMBL" id="BX537369">
    <property type="protein sequence ID" value="CAD97612.1"/>
    <property type="molecule type" value="mRNA"/>
</dbReference>
<dbReference type="EMBL" id="CR749590">
    <property type="protein sequence ID" value="CAH18389.1"/>
    <property type="status" value="ALT_TERM"/>
    <property type="molecule type" value="mRNA"/>
</dbReference>
<dbReference type="EMBL" id="BC002412">
    <property type="protein sequence ID" value="AAH02412.1"/>
    <property type="molecule type" value="mRNA"/>
</dbReference>
<dbReference type="EMBL" id="BC027458">
    <property type="protein sequence ID" value="AAH27458.1"/>
    <property type="molecule type" value="mRNA"/>
</dbReference>
<dbReference type="EMBL" id="AF148646">
    <property type="protein sequence ID" value="AAF73126.1"/>
    <property type="molecule type" value="mRNA"/>
</dbReference>
<dbReference type="CCDS" id="CCDS46355.1">
    <molecule id="Q16891-1"/>
</dbReference>
<dbReference type="CCDS" id="CCDS46356.1">
    <molecule id="Q16891-4"/>
</dbReference>
<dbReference type="CCDS" id="CCDS46357.1">
    <molecule id="Q16891-2"/>
</dbReference>
<dbReference type="RefSeq" id="NP_001093639.1">
    <molecule id="Q16891-4"/>
    <property type="nucleotide sequence ID" value="NM_001100169.2"/>
</dbReference>
<dbReference type="RefSeq" id="NP_001093640.1">
    <molecule id="Q16891-2"/>
    <property type="nucleotide sequence ID" value="NM_001100170.2"/>
</dbReference>
<dbReference type="RefSeq" id="NP_001387042.1">
    <molecule id="Q16891-3"/>
    <property type="nucleotide sequence ID" value="NM_001400113.1"/>
</dbReference>
<dbReference type="RefSeq" id="NP_006830.2">
    <molecule id="Q16891-1"/>
    <property type="nucleotide sequence ID" value="NM_006839.3"/>
</dbReference>
<dbReference type="RefSeq" id="XP_005264170.1">
    <property type="nucleotide sequence ID" value="XM_005264113.1"/>
</dbReference>
<dbReference type="RefSeq" id="XP_016858683.1">
    <property type="nucleotide sequence ID" value="XM_017003194.1"/>
</dbReference>
<dbReference type="SMR" id="Q16891"/>
<dbReference type="BioGRID" id="116185">
    <property type="interactions" value="482"/>
</dbReference>
<dbReference type="ComplexPortal" id="CPX-6141">
    <property type="entry name" value="MICOS mitochondrial contact site and cristae organizing system complex"/>
</dbReference>
<dbReference type="CORUM" id="Q16891"/>
<dbReference type="DIP" id="DIP-32517N"/>
<dbReference type="FunCoup" id="Q16891">
    <property type="interactions" value="1931"/>
</dbReference>
<dbReference type="IntAct" id="Q16891">
    <property type="interactions" value="240"/>
</dbReference>
<dbReference type="MINT" id="Q16891"/>
<dbReference type="STRING" id="9606.ENSP00000387262"/>
<dbReference type="ChEMBL" id="CHEMBL4105768"/>
<dbReference type="TCDB" id="9.B.216.1.4">
    <property type="family name" value="the micos complex component, mic60 (mic60) family"/>
</dbReference>
<dbReference type="CarbonylDB" id="Q16891"/>
<dbReference type="GlyGen" id="Q16891">
    <property type="glycosylation" value="3 sites, 1 O-linked glycan (1 site)"/>
</dbReference>
<dbReference type="iPTMnet" id="Q16891"/>
<dbReference type="MetOSite" id="Q16891"/>
<dbReference type="PhosphoSitePlus" id="Q16891"/>
<dbReference type="SwissPalm" id="Q16891"/>
<dbReference type="BioMuta" id="IMMT"/>
<dbReference type="DMDM" id="29427676"/>
<dbReference type="REPRODUCTION-2DPAGE" id="IPI00554469"/>
<dbReference type="REPRODUCTION-2DPAGE" id="Q16891"/>
<dbReference type="jPOST" id="Q16891"/>
<dbReference type="MassIVE" id="Q16891"/>
<dbReference type="PaxDb" id="9606-ENSP00000387262"/>
<dbReference type="PeptideAtlas" id="Q16891"/>
<dbReference type="ProteomicsDB" id="61129">
    <molecule id="Q16891-1"/>
</dbReference>
<dbReference type="ProteomicsDB" id="61130">
    <molecule id="Q16891-2"/>
</dbReference>
<dbReference type="ProteomicsDB" id="61131">
    <molecule id="Q16891-3"/>
</dbReference>
<dbReference type="Pumba" id="Q16891"/>
<dbReference type="ABCD" id="Q16891">
    <property type="antibodies" value="1 sequenced antibody"/>
</dbReference>
<dbReference type="Antibodypedia" id="32043">
    <property type="antibodies" value="353 antibodies from 36 providers"/>
</dbReference>
<dbReference type="DNASU" id="10989"/>
<dbReference type="Ensembl" id="ENST00000410111.8">
    <molecule id="Q16891-1"/>
    <property type="protein sequence ID" value="ENSP00000387262.3"/>
    <property type="gene ID" value="ENSG00000132305.22"/>
</dbReference>
<dbReference type="Ensembl" id="ENST00000442664.6">
    <molecule id="Q16891-4"/>
    <property type="protein sequence ID" value="ENSP00000407788.2"/>
    <property type="gene ID" value="ENSG00000132305.22"/>
</dbReference>
<dbReference type="Ensembl" id="ENST00000449247.6">
    <molecule id="Q16891-2"/>
    <property type="protein sequence ID" value="ENSP00000396899.2"/>
    <property type="gene ID" value="ENSG00000132305.22"/>
</dbReference>
<dbReference type="GeneID" id="10989"/>
<dbReference type="KEGG" id="hsa:10989"/>
<dbReference type="MANE-Select" id="ENST00000410111.8">
    <property type="protein sequence ID" value="ENSP00000387262.3"/>
    <property type="RefSeq nucleotide sequence ID" value="NM_006839.3"/>
    <property type="RefSeq protein sequence ID" value="NP_006830.2"/>
</dbReference>
<dbReference type="UCSC" id="uc002sqz.4">
    <molecule id="Q16891-1"/>
    <property type="organism name" value="human"/>
</dbReference>
<dbReference type="AGR" id="HGNC:6047"/>
<dbReference type="CTD" id="10989"/>
<dbReference type="DisGeNET" id="10989"/>
<dbReference type="GeneCards" id="IMMT"/>
<dbReference type="HGNC" id="HGNC:6047">
    <property type="gene designation" value="IMMT"/>
</dbReference>
<dbReference type="HPA" id="ENSG00000132305">
    <property type="expression patterns" value="Tissue enhanced (tongue)"/>
</dbReference>
<dbReference type="MIM" id="600378">
    <property type="type" value="gene"/>
</dbReference>
<dbReference type="neXtProt" id="NX_Q16891"/>
<dbReference type="OpenTargets" id="ENSG00000132305"/>
<dbReference type="PharmGKB" id="PA29858"/>
<dbReference type="VEuPathDB" id="HostDB:ENSG00000132305"/>
<dbReference type="eggNOG" id="KOG1854">
    <property type="taxonomic scope" value="Eukaryota"/>
</dbReference>
<dbReference type="GeneTree" id="ENSGT00390000002313"/>
<dbReference type="InParanoid" id="Q16891"/>
<dbReference type="OMA" id="WIKFREL"/>
<dbReference type="OrthoDB" id="10261039at2759"/>
<dbReference type="PAN-GO" id="Q16891">
    <property type="GO annotations" value="2 GO annotations based on evolutionary models"/>
</dbReference>
<dbReference type="PhylomeDB" id="Q16891"/>
<dbReference type="TreeFam" id="TF312832"/>
<dbReference type="PathwayCommons" id="Q16891"/>
<dbReference type="Reactome" id="R-HSA-8949613">
    <property type="pathway name" value="Cristae formation"/>
</dbReference>
<dbReference type="SignaLink" id="Q16891"/>
<dbReference type="SIGNOR" id="Q16891"/>
<dbReference type="BioGRID-ORCS" id="10989">
    <property type="hits" value="171 hits in 1161 CRISPR screens"/>
</dbReference>
<dbReference type="CD-CODE" id="FB4E32DD">
    <property type="entry name" value="Presynaptic clusters and postsynaptic densities"/>
</dbReference>
<dbReference type="ChiTaRS" id="IMMT">
    <property type="organism name" value="human"/>
</dbReference>
<dbReference type="GeneWiki" id="IMMT"/>
<dbReference type="GenomeRNAi" id="10989"/>
<dbReference type="Pharos" id="Q16891">
    <property type="development level" value="Tbio"/>
</dbReference>
<dbReference type="PRO" id="PR:Q16891"/>
<dbReference type="Proteomes" id="UP000005640">
    <property type="component" value="Chromosome 2"/>
</dbReference>
<dbReference type="RNAct" id="Q16891">
    <property type="molecule type" value="protein"/>
</dbReference>
<dbReference type="Bgee" id="ENSG00000132305">
    <property type="expression patterns" value="Expressed in heart left ventricle and 207 other cell types or tissues"/>
</dbReference>
<dbReference type="ExpressionAtlas" id="Q16891">
    <property type="expression patterns" value="baseline and differential"/>
</dbReference>
<dbReference type="GO" id="GO:0016020">
    <property type="term" value="C:membrane"/>
    <property type="evidence" value="ECO:0007005"/>
    <property type="project" value="UniProtKB"/>
</dbReference>
<dbReference type="GO" id="GO:0140275">
    <property type="term" value="C:MIB complex"/>
    <property type="evidence" value="ECO:0007005"/>
    <property type="project" value="UniProtKB"/>
</dbReference>
<dbReference type="GO" id="GO:0061617">
    <property type="term" value="C:MICOS complex"/>
    <property type="evidence" value="ECO:0000314"/>
    <property type="project" value="UniProtKB"/>
</dbReference>
<dbReference type="GO" id="GO:0044284">
    <property type="term" value="C:mitochondrial crista junction"/>
    <property type="evidence" value="ECO:0000303"/>
    <property type="project" value="ComplexPortal"/>
</dbReference>
<dbReference type="GO" id="GO:0005743">
    <property type="term" value="C:mitochondrial inner membrane"/>
    <property type="evidence" value="ECO:0000314"/>
    <property type="project" value="UniProtKB"/>
</dbReference>
<dbReference type="GO" id="GO:0005758">
    <property type="term" value="C:mitochondrial intermembrane space"/>
    <property type="evidence" value="ECO:0007669"/>
    <property type="project" value="Ensembl"/>
</dbReference>
<dbReference type="GO" id="GO:0005739">
    <property type="term" value="C:mitochondrion"/>
    <property type="evidence" value="ECO:0000314"/>
    <property type="project" value="HPA"/>
</dbReference>
<dbReference type="GO" id="GO:0001401">
    <property type="term" value="C:SAM complex"/>
    <property type="evidence" value="ECO:0007005"/>
    <property type="project" value="UniProtKB"/>
</dbReference>
<dbReference type="GO" id="GO:0003723">
    <property type="term" value="F:RNA binding"/>
    <property type="evidence" value="ECO:0007005"/>
    <property type="project" value="UniProtKB"/>
</dbReference>
<dbReference type="GO" id="GO:0042407">
    <property type="term" value="P:cristae formation"/>
    <property type="evidence" value="ECO:0000315"/>
    <property type="project" value="UniProtKB"/>
</dbReference>
<dbReference type="GO" id="GO:0007007">
    <property type="term" value="P:inner mitochondrial membrane organization"/>
    <property type="evidence" value="ECO:0000305"/>
    <property type="project" value="UniProtKB"/>
</dbReference>
<dbReference type="GO" id="GO:0051560">
    <property type="term" value="P:mitochondrial calcium ion homeostasis"/>
    <property type="evidence" value="ECO:0007669"/>
    <property type="project" value="Ensembl"/>
</dbReference>
<dbReference type="GO" id="GO:0070050">
    <property type="term" value="P:neuron cellular homeostasis"/>
    <property type="evidence" value="ECO:0007669"/>
    <property type="project" value="Ensembl"/>
</dbReference>
<dbReference type="InterPro" id="IPR019133">
    <property type="entry name" value="MIC60"/>
</dbReference>
<dbReference type="PANTHER" id="PTHR15415:SF7">
    <property type="entry name" value="MICOS COMPLEX SUBUNIT MIC60"/>
    <property type="match status" value="1"/>
</dbReference>
<dbReference type="PANTHER" id="PTHR15415">
    <property type="entry name" value="MITOFILIN"/>
    <property type="match status" value="1"/>
</dbReference>
<dbReference type="Pfam" id="PF09731">
    <property type="entry name" value="Mitofilin"/>
    <property type="match status" value="1"/>
</dbReference>
<reference key="1">
    <citation type="journal article" date="1994" name="Gene">
        <title>A novel human gene that is preferentially transcribed in heart muscle.</title>
        <authorList>
            <person name="Icho T."/>
            <person name="Ikeda T."/>
            <person name="Matsumoto Y."/>
            <person name="Hanaoka F."/>
            <person name="Kaji K."/>
            <person name="Tsuchida N."/>
        </authorList>
    </citation>
    <scope>NUCLEOTIDE SEQUENCE [MRNA] (ISOFORM 1)</scope>
</reference>
<reference key="2">
    <citation type="journal article" date="1997" name="Exp. Cell Res.">
        <title>Mitofilin is a transmembrane protein of the inner mitochondrial membrane expressed as two isoforms.</title>
        <authorList>
            <person name="Gieffers C."/>
            <person name="Korioth F."/>
            <person name="Heimann P."/>
            <person name="Ungermann C."/>
            <person name="Frey J."/>
        </authorList>
    </citation>
    <scope>NUCLEOTIDE SEQUENCE [MRNA] (ISOFORM 1)</scope>
    <scope>VARIANT SER-124</scope>
</reference>
<reference key="3">
    <citation type="submission" date="2004-06" db="EMBL/GenBank/DDBJ databases">
        <title>Cloning of human full open reading frames in Gateway(TM) system entry vector (pDONR201).</title>
        <authorList>
            <person name="Ebert L."/>
            <person name="Schick M."/>
            <person name="Neubert P."/>
            <person name="Schatten R."/>
            <person name="Henze S."/>
            <person name="Korn B."/>
        </authorList>
    </citation>
    <scope>NUCLEOTIDE SEQUENCE [LARGE SCALE MRNA] (ISOFORM 1)</scope>
</reference>
<reference key="4">
    <citation type="journal article" date="2004" name="Nat. Genet.">
        <title>Complete sequencing and characterization of 21,243 full-length human cDNAs.</title>
        <authorList>
            <person name="Ota T."/>
            <person name="Suzuki Y."/>
            <person name="Nishikawa T."/>
            <person name="Otsuki T."/>
            <person name="Sugiyama T."/>
            <person name="Irie R."/>
            <person name="Wakamatsu A."/>
            <person name="Hayashi K."/>
            <person name="Sato H."/>
            <person name="Nagai K."/>
            <person name="Kimura K."/>
            <person name="Makita H."/>
            <person name="Sekine M."/>
            <person name="Obayashi M."/>
            <person name="Nishi T."/>
            <person name="Shibahara T."/>
            <person name="Tanaka T."/>
            <person name="Ishii S."/>
            <person name="Yamamoto J."/>
            <person name="Saito K."/>
            <person name="Kawai Y."/>
            <person name="Isono Y."/>
            <person name="Nakamura Y."/>
            <person name="Nagahari K."/>
            <person name="Murakami K."/>
            <person name="Yasuda T."/>
            <person name="Iwayanagi T."/>
            <person name="Wagatsuma M."/>
            <person name="Shiratori A."/>
            <person name="Sudo H."/>
            <person name="Hosoiri T."/>
            <person name="Kaku Y."/>
            <person name="Kodaira H."/>
            <person name="Kondo H."/>
            <person name="Sugawara M."/>
            <person name="Takahashi M."/>
            <person name="Kanda K."/>
            <person name="Yokoi T."/>
            <person name="Furuya T."/>
            <person name="Kikkawa E."/>
            <person name="Omura Y."/>
            <person name="Abe K."/>
            <person name="Kamihara K."/>
            <person name="Katsuta N."/>
            <person name="Sato K."/>
            <person name="Tanikawa M."/>
            <person name="Yamazaki M."/>
            <person name="Ninomiya K."/>
            <person name="Ishibashi T."/>
            <person name="Yamashita H."/>
            <person name="Murakawa K."/>
            <person name="Fujimori K."/>
            <person name="Tanai H."/>
            <person name="Kimata M."/>
            <person name="Watanabe M."/>
            <person name="Hiraoka S."/>
            <person name="Chiba Y."/>
            <person name="Ishida S."/>
            <person name="Ono Y."/>
            <person name="Takiguchi S."/>
            <person name="Watanabe S."/>
            <person name="Yosida M."/>
            <person name="Hotuta T."/>
            <person name="Kusano J."/>
            <person name="Kanehori K."/>
            <person name="Takahashi-Fujii A."/>
            <person name="Hara H."/>
            <person name="Tanase T.-O."/>
            <person name="Nomura Y."/>
            <person name="Togiya S."/>
            <person name="Komai F."/>
            <person name="Hara R."/>
            <person name="Takeuchi K."/>
            <person name="Arita M."/>
            <person name="Imose N."/>
            <person name="Musashino K."/>
            <person name="Yuuki H."/>
            <person name="Oshima A."/>
            <person name="Sasaki N."/>
            <person name="Aotsuka S."/>
            <person name="Yoshikawa Y."/>
            <person name="Matsunawa H."/>
            <person name="Ichihara T."/>
            <person name="Shiohata N."/>
            <person name="Sano S."/>
            <person name="Moriya S."/>
            <person name="Momiyama H."/>
            <person name="Satoh N."/>
            <person name="Takami S."/>
            <person name="Terashima Y."/>
            <person name="Suzuki O."/>
            <person name="Nakagawa S."/>
            <person name="Senoh A."/>
            <person name="Mizoguchi H."/>
            <person name="Goto Y."/>
            <person name="Shimizu F."/>
            <person name="Wakebe H."/>
            <person name="Hishigaki H."/>
            <person name="Watanabe T."/>
            <person name="Sugiyama A."/>
            <person name="Takemoto M."/>
            <person name="Kawakami B."/>
            <person name="Yamazaki M."/>
            <person name="Watanabe K."/>
            <person name="Kumagai A."/>
            <person name="Itakura S."/>
            <person name="Fukuzumi Y."/>
            <person name="Fujimori Y."/>
            <person name="Komiyama M."/>
            <person name="Tashiro H."/>
            <person name="Tanigami A."/>
            <person name="Fujiwara T."/>
            <person name="Ono T."/>
            <person name="Yamada K."/>
            <person name="Fujii Y."/>
            <person name="Ozaki K."/>
            <person name="Hirao M."/>
            <person name="Ohmori Y."/>
            <person name="Kawabata A."/>
            <person name="Hikiji T."/>
            <person name="Kobatake N."/>
            <person name="Inagaki H."/>
            <person name="Ikema Y."/>
            <person name="Okamoto S."/>
            <person name="Okitani R."/>
            <person name="Kawakami T."/>
            <person name="Noguchi S."/>
            <person name="Itoh T."/>
            <person name="Shigeta K."/>
            <person name="Senba T."/>
            <person name="Matsumura K."/>
            <person name="Nakajima Y."/>
            <person name="Mizuno T."/>
            <person name="Morinaga M."/>
            <person name="Sasaki M."/>
            <person name="Togashi T."/>
            <person name="Oyama M."/>
            <person name="Hata H."/>
            <person name="Watanabe M."/>
            <person name="Komatsu T."/>
            <person name="Mizushima-Sugano J."/>
            <person name="Satoh T."/>
            <person name="Shirai Y."/>
            <person name="Takahashi Y."/>
            <person name="Nakagawa K."/>
            <person name="Okumura K."/>
            <person name="Nagase T."/>
            <person name="Nomura N."/>
            <person name="Kikuchi H."/>
            <person name="Masuho Y."/>
            <person name="Yamashita R."/>
            <person name="Nakai K."/>
            <person name="Yada T."/>
            <person name="Nakamura Y."/>
            <person name="Ohara O."/>
            <person name="Isogai T."/>
            <person name="Sugano S."/>
        </authorList>
    </citation>
    <scope>NUCLEOTIDE SEQUENCE [LARGE SCALE MRNA] (ISOFORM 1)</scope>
</reference>
<reference key="5">
    <citation type="submission" date="2005-02" db="EMBL/GenBank/DDBJ databases">
        <title>Identification of a human cell proliferation gene.</title>
        <authorList>
            <person name="Kim J.W."/>
            <person name="Kim H.K."/>
            <person name="Shin S.M."/>
        </authorList>
    </citation>
    <scope>NUCLEOTIDE SEQUENCE [LARGE SCALE MRNA] (ISOFORM 4)</scope>
</reference>
<reference key="6">
    <citation type="journal article" date="2007" name="BMC Genomics">
        <title>The full-ORF clone resource of the German cDNA consortium.</title>
        <authorList>
            <person name="Bechtel S."/>
            <person name="Rosenfelder H."/>
            <person name="Duda A."/>
            <person name="Schmidt C.P."/>
            <person name="Ernst U."/>
            <person name="Wellenreuther R."/>
            <person name="Mehrle A."/>
            <person name="Schuster C."/>
            <person name="Bahr A."/>
            <person name="Bloecker H."/>
            <person name="Heubner D."/>
            <person name="Hoerlein A."/>
            <person name="Michel G."/>
            <person name="Wedler H."/>
            <person name="Koehrer K."/>
            <person name="Ottenwaelder B."/>
            <person name="Poustka A."/>
            <person name="Wiemann S."/>
            <person name="Schupp I."/>
        </authorList>
    </citation>
    <scope>NUCLEOTIDE SEQUENCE [LARGE SCALE MRNA] (ISOFORM 2)</scope>
    <scope>NUCLEOTIDE SEQUENCE [LARGE SCALE MRNA] OF 159-758 (ISOFORM 3)</scope>
    <scope>VARIANT SER-124</scope>
    <source>
        <tissue>Colon endothelium</tissue>
        <tissue>Fetal liver</tissue>
    </source>
</reference>
<reference key="7">
    <citation type="journal article" date="2004" name="Genome Res.">
        <title>The status, quality, and expansion of the NIH full-length cDNA project: the Mammalian Gene Collection (MGC).</title>
        <authorList>
            <consortium name="The MGC Project Team"/>
        </authorList>
    </citation>
    <scope>NUCLEOTIDE SEQUENCE [LARGE SCALE MRNA] (ISOFORM 1)</scope>
    <source>
        <tissue>Cervix</tissue>
        <tissue>Muscle</tissue>
    </source>
</reference>
<reference key="8">
    <citation type="submission" date="2005-04" db="UniProtKB">
        <authorList>
            <person name="Bienvenut W.V."/>
        </authorList>
    </citation>
    <scope>PROTEIN SEQUENCE OF 85-101; 103-119; 123-130; 171-195; 223-229; 258-269; 287-297; 316-343; 345-366; 386-395; 428-436; 500-525; 548-564; 582-600; 624-632; 645-652 AND 720-726</scope>
    <scope>IDENTIFICATION BY MASS SPECTROMETRY</scope>
    <source>
        <tissue>B-cell lymphoma</tissue>
    </source>
</reference>
<reference key="9">
    <citation type="submission" date="1999-05" db="EMBL/GenBank/DDBJ databases">
        <title>Detection of membrane-associated proteins using serum of mice immunized with membrane fractions of breast carcinoma cells.</title>
        <authorList>
            <person name="Weidenmueller U."/>
            <person name="Tur M.K."/>
            <person name="Tawadros S."/>
            <person name="Engert A."/>
            <person name="Barth S."/>
        </authorList>
    </citation>
    <scope>NUCLEOTIDE SEQUENCE [MRNA] OF 144-758 (ISOFORM 1)</scope>
    <source>
        <tissue>Mammary carcinoma</tissue>
    </source>
</reference>
<reference key="10">
    <citation type="submission" date="2008-12" db="UniProtKB">
        <authorList>
            <person name="Lubec G."/>
            <person name="Afjehi-Sadat L."/>
            <person name="Chen W.-Q."/>
            <person name="Sun Y."/>
        </authorList>
    </citation>
    <scope>PROTEIN SEQUENCE OF 354-366; 372-385; 517-525; 527-545; 548-564 AND 601-623</scope>
    <scope>IDENTIFICATION BY MASS SPECTROMETRY</scope>
    <source>
        <tissue>Brain</tissue>
        <tissue>Cajal-Retzius cell</tissue>
        <tissue>Fetal brain cortex</tissue>
    </source>
</reference>
<reference key="11">
    <citation type="journal article" date="2003" name="Nature">
        <title>Proteomic characterization of the human centrosome by protein correlation profiling.</title>
        <authorList>
            <person name="Andersen J.S."/>
            <person name="Wilkinson C.J."/>
            <person name="Mayor T."/>
            <person name="Mortensen P."/>
            <person name="Nigg E.A."/>
            <person name="Mann M."/>
        </authorList>
    </citation>
    <scope>IDENTIFICATION BY MASS SPECTROMETRY</scope>
    <source>
        <tissue>Lymphoblast</tissue>
    </source>
</reference>
<reference key="12">
    <citation type="journal article" date="2009" name="Science">
        <title>Lysine acetylation targets protein complexes and co-regulates major cellular functions.</title>
        <authorList>
            <person name="Choudhary C."/>
            <person name="Kumar C."/>
            <person name="Gnad F."/>
            <person name="Nielsen M.L."/>
            <person name="Rehman M."/>
            <person name="Walther T.C."/>
            <person name="Olsen J.V."/>
            <person name="Mann M."/>
        </authorList>
    </citation>
    <scope>ACETYLATION [LARGE SCALE ANALYSIS] AT LYS-211; LYS-222 AND LYS-451</scope>
    <scope>IDENTIFICATION BY MASS SPECTROMETRY [LARGE SCALE ANALYSIS]</scope>
</reference>
<reference key="13">
    <citation type="journal article" date="2011" name="BMC Syst. Biol.">
        <title>Initial characterization of the human central proteome.</title>
        <authorList>
            <person name="Burkard T.R."/>
            <person name="Planyavsky M."/>
            <person name="Kaupe I."/>
            <person name="Breitwieser F.P."/>
            <person name="Buerckstuemmer T."/>
            <person name="Bennett K.L."/>
            <person name="Superti-Furga G."/>
            <person name="Colinge J."/>
        </authorList>
    </citation>
    <scope>IDENTIFICATION BY MASS SPECTROMETRY [LARGE SCALE ANALYSIS]</scope>
</reference>
<reference key="14">
    <citation type="journal article" date="2011" name="J. Biol. Chem.">
        <title>ChChd3, an inner mitochondrial membrane protein, is essential for maintaining crista integrity and mitochondrial function.</title>
        <authorList>
            <person name="Darshi M."/>
            <person name="Mendiola V.L."/>
            <person name="Mackey M.R."/>
            <person name="Murphy A.N."/>
            <person name="Koller A."/>
            <person name="Perkins G.A."/>
            <person name="Ellisman M.H."/>
            <person name="Taylor S.S."/>
        </authorList>
    </citation>
    <scope>INTERACTION WITH CHCHD3 AND OPA1</scope>
</reference>
<reference key="15">
    <citation type="journal article" date="2012" name="Mol. Biol. Cell">
        <title>MINOS1 is a conserved component of mitofilin complexes and required for mitochondrial function and cristae organization.</title>
        <authorList>
            <person name="Alkhaja A.K."/>
            <person name="Jans D.C."/>
            <person name="Nikolov M."/>
            <person name="Vukotic M."/>
            <person name="Lytovchenko O."/>
            <person name="Ludewig F."/>
            <person name="Schliebs W."/>
            <person name="Riedel D."/>
            <person name="Urlaub H."/>
            <person name="Jakobs S."/>
            <person name="Deckers M."/>
        </authorList>
    </citation>
    <scope>IDENTIFICATION IN THE MICOS COMPLEX</scope>
    <scope>FUNCTION</scope>
</reference>
<reference key="16">
    <citation type="journal article" date="2012" name="J. Biol. Chem.">
        <title>CHCM1/CHCHD6, a novel mitochondrial protein linked to regulation of mitofilin and mitochondrial cristae morphology.</title>
        <authorList>
            <person name="An J."/>
            <person name="Shi J."/>
            <person name="He Q."/>
            <person name="Lui K."/>
            <person name="Liu Y."/>
            <person name="Huang Y."/>
            <person name="Sheikh M.S."/>
        </authorList>
    </citation>
    <scope>INTERACTION WITH CHCHD6</scope>
</reference>
<reference key="17">
    <citation type="journal article" date="2012" name="Mol. Cell. Biol.">
        <title>Sam50 functions in mitochondrial intermembrane space bridging and biogenesis of respiratory complexes.</title>
        <authorList>
            <person name="Ott C."/>
            <person name="Ross K."/>
            <person name="Straub S."/>
            <person name="Thiede B."/>
            <person name="Gotz M."/>
            <person name="Goosmann C."/>
            <person name="Krischke M."/>
            <person name="Mueller M.J."/>
            <person name="Krohne G."/>
            <person name="Rudel T."/>
            <person name="Kozjak-Pavlovic V."/>
        </authorList>
    </citation>
    <scope>IDENTIFICATION IN THE MIB COMPLEX</scope>
</reference>
<reference key="18">
    <citation type="journal article" date="2013" name="J. Proteome Res.">
        <title>Toward a comprehensive characterization of a human cancer cell phosphoproteome.</title>
        <authorList>
            <person name="Zhou H."/>
            <person name="Di Palma S."/>
            <person name="Preisinger C."/>
            <person name="Peng M."/>
            <person name="Polat A.N."/>
            <person name="Heck A.J."/>
            <person name="Mohammed S."/>
        </authorList>
    </citation>
    <scope>PHOSPHORYLATION [LARGE SCALE ANALYSIS] AT SER-112; SER-113 AND SER-388</scope>
    <scope>IDENTIFICATION BY MASS SPECTROMETRY [LARGE SCALE ANALYSIS]</scope>
    <source>
        <tissue>Erythroleukemia</tissue>
    </source>
</reference>
<reference key="19">
    <citation type="journal article" date="2014" name="J. Cell Biol.">
        <title>Uniform nomenclature for the mitochondrial contact site and cristae organizing system.</title>
        <authorList>
            <person name="Pfanner N."/>
            <person name="van der Laan M."/>
            <person name="Amati P."/>
            <person name="Capaldi R.A."/>
            <person name="Caudy A.A."/>
            <person name="Chacinska A."/>
            <person name="Darshi M."/>
            <person name="Deckers M."/>
            <person name="Hoppins S."/>
            <person name="Icho T."/>
            <person name="Jakobs S."/>
            <person name="Ji J."/>
            <person name="Kozjak-Pavlovic V."/>
            <person name="Meisinger C."/>
            <person name="Odgren P.R."/>
            <person name="Park S.K."/>
            <person name="Rehling P."/>
            <person name="Reichert A.S."/>
            <person name="Sheikh M.S."/>
            <person name="Taylor S.S."/>
            <person name="Tsuchida N."/>
            <person name="van der Bliek A.M."/>
            <person name="van der Klei I.J."/>
            <person name="Weissman J.S."/>
            <person name="Westermann B."/>
            <person name="Zha J."/>
            <person name="Neupert W."/>
            <person name="Nunnari J."/>
        </authorList>
    </citation>
    <scope>NOMENCLATURE</scope>
</reference>
<reference key="20">
    <citation type="journal article" date="2014" name="J. Proteomics">
        <title>An enzyme assisted RP-RPLC approach for in-depth analysis of human liver phosphoproteome.</title>
        <authorList>
            <person name="Bian Y."/>
            <person name="Song C."/>
            <person name="Cheng K."/>
            <person name="Dong M."/>
            <person name="Wang F."/>
            <person name="Huang J."/>
            <person name="Sun D."/>
            <person name="Wang L."/>
            <person name="Ye M."/>
            <person name="Zou H."/>
        </authorList>
    </citation>
    <scope>PHOSPHORYLATION [LARGE SCALE ANALYSIS] AT SER-103 AND SER-390</scope>
    <scope>IDENTIFICATION BY MASS SPECTROMETRY [LARGE SCALE ANALYSIS]</scope>
    <source>
        <tissue>Liver</tissue>
    </source>
</reference>
<reference key="21">
    <citation type="journal article" date="2015" name="Biochim. Biophys. Acta">
        <title>The non-glycosylated isoform of MIC26 is a constituent of the mammalian MICOS complex and promotes formation of crista junctions.</title>
        <authorList>
            <person name="Koob S."/>
            <person name="Barrera M."/>
            <person name="Anand R."/>
            <person name="Reichert A.S."/>
        </authorList>
    </citation>
    <scope>SUBCELLULAR LOCATION</scope>
    <scope>INTERACTION WITH MICOS10; APOO AND APOOL</scope>
</reference>
<reference key="22">
    <citation type="journal article" date="2015" name="Elife">
        <title>QIL1 is a novel mitochondrial protein required for MICOS complex stability and cristae morphology.</title>
        <authorList>
            <person name="Guarani V."/>
            <person name="McNeill E.M."/>
            <person name="Paulo J.A."/>
            <person name="Huttlin E.L."/>
            <person name="Froehlich F."/>
            <person name="Gygi S.P."/>
            <person name="Van Vactor D."/>
            <person name="Harper J.W."/>
        </authorList>
    </citation>
    <scope>IDENTIFICATION IN THE MICOS COMPLEX</scope>
    <scope>SUBCELLULAR LOCATION</scope>
    <scope>INTERACTION WITH MICOS13; MICOS10; CHCHD3; CHCHD6; SAMM50 AND TMEM11</scope>
</reference>
<reference key="23">
    <citation type="journal article" date="2015" name="PLoS ONE">
        <title>Detailed analysis of the human mitochondrial contact site complex indicate a hierarchy of subunits.</title>
        <authorList>
            <person name="Ott C."/>
            <person name="Dorsch E."/>
            <person name="Fraunholz M."/>
            <person name="Straub S."/>
            <person name="Kozjak-Pavlovic V."/>
        </authorList>
    </citation>
    <scope>IDENTIFICATION IN THE MICOS AND MIB COMPLEX</scope>
    <scope>FUNCTION</scope>
    <scope>SUBCELLULAR LOCATION</scope>
    <scope>INTERACTION WITH APOO</scope>
</reference>
<reference key="24">
    <citation type="journal article" date="2015" name="Proteomics">
        <title>N-terminome analysis of the human mitochondrial proteome.</title>
        <authorList>
            <person name="Vaca Jacome A.S."/>
            <person name="Rabilloud T."/>
            <person name="Schaeffer-Reiss C."/>
            <person name="Rompais M."/>
            <person name="Ayoub D."/>
            <person name="Lane L."/>
            <person name="Bairoch A."/>
            <person name="Van Dorsselaer A."/>
            <person name="Carapito C."/>
        </authorList>
    </citation>
    <scope>CLEAVAGE OF TRANSIT PEPTIDE [LARGE SCALE ANALYSIS] AFTER TYR-33</scope>
    <scope>IDENTIFICATION BY MASS SPECTROMETRY [LARGE SCALE ANALYSIS]</scope>
</reference>
<reference key="25">
    <citation type="journal article" date="2019" name="PLoS ONE">
        <title>Armadillo repeat-containing protein 1 is a dual localization protein associated with mitochondrial intermembrane space bridging complex.</title>
        <authorList>
            <person name="Wagner F."/>
            <person name="Kunz T.C."/>
            <person name="Chowdhury S.R."/>
            <person name="Thiede B."/>
            <person name="Fraunholz M."/>
            <person name="Eger D."/>
            <person name="Kozjak-Pavlovic V."/>
        </authorList>
    </citation>
    <scope>INTERACTION WITH ARMC1</scope>
</reference>
<reference key="26">
    <citation type="journal article" date="2020" name="Cell Death Dis.">
        <title>OPA1 and MICOS Regulate mitochondrial crista dynamics and formation.</title>
        <authorList>
            <person name="Hu C."/>
            <person name="Shu L."/>
            <person name="Huang X."/>
            <person name="Yu J."/>
            <person name="Li L."/>
            <person name="Gong L."/>
            <person name="Yang M."/>
            <person name="Wu Z."/>
            <person name="Gao Z."/>
            <person name="Zhao Y."/>
            <person name="Chen L."/>
            <person name="Song Z."/>
        </authorList>
    </citation>
    <scope>FUNCTION</scope>
</reference>
<reference key="27">
    <citation type="journal article" date="2020" name="EMBO J.">
        <title>MICOS assembly controls mitochondrial inner membrane remodeling and crista junction redistribution to mediate cristae formation.</title>
        <authorList>
            <person name="Stephan T."/>
            <person name="Brueser C."/>
            <person name="Deckers M."/>
            <person name="Steyer A.M."/>
            <person name="Balzarotti F."/>
            <person name="Barbot M."/>
            <person name="Behr T.S."/>
            <person name="Heim G."/>
            <person name="Huebner W."/>
            <person name="Ilgen P."/>
            <person name="Lange F."/>
            <person name="Pacheu-Grau D."/>
            <person name="Pape J.K."/>
            <person name="Stoldt S."/>
            <person name="Huser T."/>
            <person name="Hell S.W."/>
            <person name="Moebius W."/>
            <person name="Rehling P."/>
            <person name="Riedel D."/>
            <person name="Jakobs S."/>
        </authorList>
    </citation>
    <scope>FUNCTION</scope>
    <scope>IDENTIFICATION IN THE MICOS COMPLEX</scope>
</reference>
<reference key="28">
    <citation type="journal article" date="2021" name="Proc. Natl. Acad. Sci. U.S.A.">
        <title>The human cytomegalovirus protein pUL13 targets mitochondrial cristae architecture to increase cellular respiration during infection.</title>
        <authorList>
            <person name="Betsinger C.N."/>
            <person name="Jankowski C.S.R."/>
            <person name="Hofstadter W.A."/>
            <person name="Federspiel J.D."/>
            <person name="Otter C.J."/>
            <person name="Jean Beltran P.M."/>
            <person name="Cristea I.M."/>
        </authorList>
    </citation>
    <scope>INTERACTION WITH HUMAN CYTOMEGALOVIRUS PROTEIN UL13 (MICROBIAL INFECTION)</scope>
</reference>
<reference key="29">
    <citation type="journal article" date="2023" name="Mol. Psychiatry">
        <title>Mitochondrial DNA variation in Alzheimer's disease reveals a unique microprotein called SHMOOSE.</title>
        <authorList>
            <consortium name="Alzheimer's Disease Neuroimaging Initiative"/>
            <person name="Miller B."/>
            <person name="Kim S.J."/>
            <person name="Mehta H.H."/>
            <person name="Cao K."/>
            <person name="Kumagai H."/>
            <person name="Thumaty N."/>
            <person name="Leelaprachakul N."/>
            <person name="Braniff R.G."/>
            <person name="Jiao H."/>
            <person name="Vaughan J."/>
            <person name="Diedrich J."/>
            <person name="Saghatelian A."/>
            <person name="Arpawong T.E."/>
            <person name="Crimmins E.M."/>
            <person name="Ertekin-Taner N."/>
            <person name="Tubi M.A."/>
            <person name="Hare E.T."/>
            <person name="Braskie M.N."/>
            <person name="Decarie-Spain L."/>
            <person name="Kanoski S.E."/>
            <person name="Grodstein F."/>
            <person name="Bennett D.A."/>
            <person name="Zhao L."/>
            <person name="Toga A.W."/>
            <person name="Wan J."/>
            <person name="Yen K."/>
            <person name="Cohen P."/>
        </authorList>
    </citation>
    <scope>INTERACTION WITH SHMOOSE</scope>
</reference>
<reference key="30">
    <citation type="journal article" date="2023" name="Mol. Psychiatry">
        <authorList>
            <consortium name="Alzheimer's Disease Neuroimaging Initiative"/>
            <person name="Miller B."/>
            <person name="Kim S.J."/>
            <person name="Mehta H.H."/>
            <person name="Cao K."/>
            <person name="Kumagai H."/>
            <person name="Thumaty N."/>
            <person name="Leelaprachakul N."/>
            <person name="Braniff R.G."/>
            <person name="Jiao H."/>
            <person name="Vaughan J."/>
            <person name="Diedrich J."/>
            <person name="Saghatelian A."/>
            <person name="Arpawong T.E."/>
            <person name="Crimmins E.M."/>
            <person name="Ertekin-Taner N."/>
            <person name="Tubi M.A."/>
            <person name="Hare E.T."/>
            <person name="Braskie M.N."/>
            <person name="Decarie-Spain L."/>
            <person name="Kanoski S.E."/>
            <person name="Grodstein F."/>
            <person name="Bennett D.A."/>
            <person name="Zhao L."/>
            <person name="Toga A.W."/>
            <person name="Wan J."/>
            <person name="Yen K."/>
            <person name="Cohen P."/>
        </authorList>
    </citation>
    <scope>ERRATUM OF PUBMED:36127429</scope>
</reference>
<name>MIC60_HUMAN</name>
<feature type="transit peptide" description="Mitochondrion" evidence="3 25">
    <location>
        <begin position="1"/>
        <end position="33"/>
    </location>
</feature>
<feature type="chain" id="PRO_0000084184" description="MICOS complex subunit MIC60">
    <location>
        <begin position="34"/>
        <end position="758"/>
    </location>
</feature>
<feature type="topological domain" description="Mitochondrial matrix" evidence="3">
    <location>
        <begin position="34"/>
        <end position="45"/>
    </location>
</feature>
<feature type="transmembrane region" description="Helical" evidence="3">
    <location>
        <begin position="46"/>
        <end position="64"/>
    </location>
</feature>
<feature type="topological domain" description="Mitochondrial intermembrane" evidence="3">
    <location>
        <begin position="65"/>
        <end position="758"/>
    </location>
</feature>
<feature type="region of interest" description="Disordered" evidence="4">
    <location>
        <begin position="116"/>
        <end position="143"/>
    </location>
</feature>
<feature type="region of interest" description="Disordered" evidence="4">
    <location>
        <begin position="162"/>
        <end position="200"/>
    </location>
</feature>
<feature type="compositionally biased region" description="Basic and acidic residues" evidence="4">
    <location>
        <begin position="167"/>
        <end position="178"/>
    </location>
</feature>
<feature type="modified residue" description="Phosphoserine" evidence="24">
    <location>
        <position position="103"/>
    </location>
</feature>
<feature type="modified residue" description="Phosphoserine" evidence="23">
    <location>
        <position position="112"/>
    </location>
</feature>
<feature type="modified residue" description="Phosphoserine" evidence="23">
    <location>
        <position position="113"/>
    </location>
</feature>
<feature type="modified residue" description="N6-acetyllysine" evidence="22">
    <location>
        <position position="211"/>
    </location>
</feature>
<feature type="modified residue" description="N6-acetyllysine" evidence="22">
    <location>
        <position position="222"/>
    </location>
</feature>
<feature type="modified residue" description="Phosphoserine" evidence="1">
    <location>
        <position position="223"/>
    </location>
</feature>
<feature type="modified residue" description="Phosphoserine" evidence="23">
    <location>
        <position position="388"/>
    </location>
</feature>
<feature type="modified residue" description="Phosphoserine" evidence="24">
    <location>
        <position position="390"/>
    </location>
</feature>
<feature type="modified residue" description="N6-acetyllysine" evidence="22">
    <location>
        <position position="451"/>
    </location>
</feature>
<feature type="splice variant" id="VSP_013220" description="In isoform 2." evidence="19">
    <location>
        <begin position="142"/>
        <end position="152"/>
    </location>
</feature>
<feature type="splice variant" id="VSP_013221" description="In isoform 3." evidence="19">
    <original>EEASSSSIRERPPEEVAARLAQQEKQEQVKIES</original>
    <variation>A</variation>
    <location>
        <begin position="187"/>
        <end position="219"/>
    </location>
</feature>
<feature type="splice variant" id="VSP_047362" description="In isoform 4." evidence="20">
    <location>
        <position position="188"/>
    </location>
</feature>
<feature type="sequence variant" id="VAR_021530" description="In dbSNP:rs1050301." evidence="5 18">
    <original>P</original>
    <variation>S</variation>
    <location>
        <position position="124"/>
    </location>
</feature>
<feature type="sequence variant" id="VAR_051068" description="In dbSNP:rs35233009.">
    <original>A</original>
    <variation>V</variation>
    <location>
        <position position="294"/>
    </location>
</feature>
<feature type="sequence conflict" description="In Ref. 9; AAF73126." evidence="21" ref="9">
    <original>EAAQIISA</original>
    <variation>ARAPASLT</variation>
    <location>
        <begin position="144"/>
        <end position="151"/>
    </location>
</feature>
<feature type="sequence conflict" description="In Ref. 3; CAG33074." evidence="21" ref="3">
    <original>A</original>
    <variation>S</variation>
    <location>
        <position position="151"/>
    </location>
</feature>
<feature type="sequence conflict" description="In Ref. 4; BAG35183." evidence="21" ref="4">
    <original>D</original>
    <variation>E</variation>
    <location>
        <position position="154"/>
    </location>
</feature>
<feature type="sequence conflict" description="In Ref. 9; AAF73126." evidence="21" ref="9">
    <original>H</original>
    <variation>Y</variation>
    <location>
        <position position="173"/>
    </location>
</feature>
<feature type="sequence conflict" description="In Ref. 9; AAF73126." evidence="21" ref="9">
    <original>A</original>
    <variation>T</variation>
    <location>
        <position position="312"/>
    </location>
</feature>
<feature type="sequence conflict" description="In Ref. 9; AAF73126." evidence="21" ref="9">
    <original>T</original>
    <variation>S</variation>
    <location>
        <position position="325"/>
    </location>
</feature>
<feature type="sequence conflict" description="In Ref. 9; AAF73126." evidence="21" ref="9">
    <original>SVSDLA</original>
    <variation>T</variation>
    <location>
        <begin position="388"/>
        <end position="393"/>
    </location>
</feature>
<feature type="sequence conflict" description="In Ref. 6; CAH18389." evidence="21" ref="6">
    <original>L</original>
    <variation>S</variation>
    <location>
        <position position="432"/>
    </location>
</feature>
<feature type="sequence conflict" description="In Ref. 6; CAH18389." evidence="21" ref="6">
    <original>V</original>
    <variation>A</variation>
    <location>
        <position position="449"/>
    </location>
</feature>
<feature type="sequence conflict" description="In Ref. 6; CAH18389." evidence="21" ref="6">
    <original>T</original>
    <variation>A</variation>
    <location>
        <position position="731"/>
    </location>
</feature>
<feature type="sequence conflict" description="In Ref. 3; CAG33074." evidence="21" ref="3">
    <original>E</original>
    <variation>D</variation>
    <location>
        <position position="758"/>
    </location>
</feature>
<accession>Q16891</accession>
<accession>B1H0U5</accession>
<accession>B2R5N6</accession>
<accession>Q14539</accession>
<accession>Q15092</accession>
<accession>Q68D41</accession>
<accession>Q69HW5</accession>
<accession>Q6IBL0</accession>
<accession>Q7Z3X1</accession>
<accession>Q8TAJ5</accession>
<accession>Q9P0V2</accession>
<keyword id="KW-0007">Acetylation</keyword>
<keyword id="KW-0025">Alternative splicing</keyword>
<keyword id="KW-0903">Direct protein sequencing</keyword>
<keyword id="KW-0945">Host-virus interaction</keyword>
<keyword id="KW-0472">Membrane</keyword>
<keyword id="KW-0496">Mitochondrion</keyword>
<keyword id="KW-0999">Mitochondrion inner membrane</keyword>
<keyword id="KW-0597">Phosphoprotein</keyword>
<keyword id="KW-1267">Proteomics identification</keyword>
<keyword id="KW-1185">Reference proteome</keyword>
<keyword id="KW-0809">Transit peptide</keyword>
<keyword id="KW-0812">Transmembrane</keyword>
<keyword id="KW-1133">Transmembrane helix</keyword>
<comment type="function">
    <text evidence="7 11 14 15">Component of the MICOS complex, a large protein complex of the mitochondrial inner membrane that plays crucial roles in the maintenance of crista junctions, inner membrane architecture, and formation of contact sites to the outer membrane (PubMed:22114354, PubMed:25781180, PubMed:32567732, PubMed:33130824). Plays an important role in the maintenance of the MICOS complex stability and the mitochondrial cristae morphology (PubMed:22114354, PubMed:25781180, PubMed:32567732, PubMed:33130824).</text>
</comment>
<comment type="subunit">
    <text evidence="2 6 7 8 9 10 11 12 13 14 17">Component of the mitochondrial contact site and cristae organizing system (MICOS) complex, composed of at least MICOS10/MIC10, CHCHD3/MIC19, CHCHD6/MIC25, APOOL/MIC27, IMMT/MIC60, APOO/MIC23/MIC26 and MICOS13/MIC13 (PubMed:25764979, PubMed:25781180, PubMed:32567732). This complex was also known under the names MINOS or MitOS complex. The MICOS complex associates with mitochondrial outer membrane proteins SAMM50, MTX1 and MTX2 (together described as components of the mitochondrial outer membrane sorting assembly machinery (SAM) complex) and DNAJC11, mitochondrial inner membrane protein TMEM11 and with HSPA9 (PubMed:25764979, PubMed:25781180). The MICOS and SAM complexes together with DNAJC11 are part of a large protein complex spanning both membranes termed the mitochondrial intermembrane space bridging (MIB) complex (PubMed:22252321). Interacts with HSPA1A/HSPA1B and OPA1, preferentially with the soluble OPA1 form (By similarity). Interacts with MICOS13/MIC13, MICOS10/MIC10, CHCHD3/MIC19, CHCHD6/MIC25, SAMM50 and TMEM11 (PubMed:25997101). Interacts with APOO/MIC23/MIC26 and APOOL/MIC27 (PubMed:25764979, PubMed:25781180). Interacts with ARMC1 (PubMed:31644573). Interacts with ARMC12 (By similarity). Interacts with mitochondrial microprotein SHMOOSE (PubMed:36127429).</text>
</comment>
<comment type="subunit">
    <text evidence="16">(Microbial infection) Interacts with human cytomegalovirus protein UL13; this interaction alters cristae architecture.</text>
</comment>
<comment type="interaction">
    <interactant intactId="EBI-473801">
        <id>Q16891</id>
    </interactant>
    <interactant intactId="EBI-946046">
        <id>P54252</id>
        <label>ATXN3</label>
    </interactant>
    <organismsDiffer>false</organismsDiffer>
    <experiments>4</experiments>
</comment>
<comment type="interaction">
    <interactant intactId="EBI-473801">
        <id>Q16891</id>
    </interactant>
    <interactant intactId="EBI-16721660">
        <id>Q8WYQ3</id>
        <label>CHCHD10</label>
    </interactant>
    <organismsDiffer>false</organismsDiffer>
    <experiments>4</experiments>
</comment>
<comment type="interaction">
    <interactant intactId="EBI-473801">
        <id>Q16891</id>
    </interactant>
    <interactant intactId="EBI-529989">
        <id>Q9NRI5</id>
        <label>DISC1</label>
    </interactant>
    <organismsDiffer>false</organismsDiffer>
    <experiments>3</experiments>
</comment>
<comment type="interaction">
    <interactant intactId="EBI-473801">
        <id>Q16891</id>
    </interactant>
    <interactant intactId="EBI-466029">
        <id>P42858</id>
        <label>HTT</label>
    </interactant>
    <organismsDiffer>false</organismsDiffer>
    <experiments>7</experiments>
</comment>
<comment type="interaction">
    <interactant intactId="EBI-473801">
        <id>Q16891</id>
    </interactant>
    <interactant intactId="EBI-710124">
        <id>O60341</id>
        <label>KDM1A</label>
    </interactant>
    <organismsDiffer>false</organismsDiffer>
    <experiments>2</experiments>
</comment>
<comment type="interaction">
    <interactant intactId="EBI-473801">
        <id>Q16891</id>
    </interactant>
    <interactant intactId="EBI-1105124">
        <id>Q5VU43</id>
        <label>PDE4DIP</label>
    </interactant>
    <organismsDiffer>false</organismsDiffer>
    <experiments>2</experiments>
</comment>
<comment type="interaction">
    <interactant intactId="EBI-473801">
        <id>Q16891</id>
    </interactant>
    <interactant intactId="EBI-715747">
        <id>P08559</id>
        <label>PDHA1</label>
    </interactant>
    <organismsDiffer>false</organismsDiffer>
    <experiments>4</experiments>
</comment>
<comment type="interaction">
    <interactant intactId="EBI-473801">
        <id>Q16891</id>
    </interactant>
    <interactant intactId="EBI-46442350">
        <id>C0HM83</id>
    </interactant>
    <organismsDiffer>false</organismsDiffer>
    <experiments>5</experiments>
</comment>
<comment type="interaction">
    <interactant intactId="EBI-11614103">
        <id>Q16891-1</id>
    </interactant>
    <interactant intactId="EBI-15881455">
        <id>Q9NRI5-1</id>
        <label>DISC1</label>
    </interactant>
    <organismsDiffer>false</organismsDiffer>
    <experiments>9</experiments>
</comment>
<comment type="interaction">
    <interactant intactId="EBI-11614103">
        <id>Q16891-1</id>
    </interactant>
    <interactant intactId="EBI-928842">
        <id>Q9GZM8</id>
        <label>NDEL1</label>
    </interactant>
    <organismsDiffer>false</organismsDiffer>
    <experiments>4</experiments>
</comment>
<comment type="subcellular location">
    <subcellularLocation>
        <location evidence="10 12">Mitochondrion inner membrane</location>
        <topology evidence="3">Single-pass membrane protein</topology>
    </subcellularLocation>
    <subcellularLocation>
        <location evidence="11">Mitochondrion</location>
    </subcellularLocation>
</comment>
<comment type="alternative products">
    <event type="alternative splicing"/>
    <isoform>
        <id>Q16891-1</id>
        <name>1</name>
        <sequence type="displayed"/>
    </isoform>
    <isoform>
        <id>Q16891-2</id>
        <name>2</name>
        <sequence type="described" ref="VSP_013220"/>
    </isoform>
    <isoform>
        <id>Q16891-3</id>
        <name>3</name>
        <sequence type="described" ref="VSP_013221"/>
    </isoform>
    <isoform>
        <id>Q16891-4</id>
        <name>4</name>
        <sequence type="described" ref="VSP_047362"/>
    </isoform>
</comment>
<comment type="similarity">
    <text evidence="21">Belongs to the MICOS complex subunit Mic60 family.</text>
</comment>
<comment type="sequence caution" evidence="21">
    <conflict type="erroneous termination">
        <sequence resource="EMBL-CDS" id="CAH18389"/>
    </conflict>
    <text>Extended C-terminus.</text>
</comment>
<organism>
    <name type="scientific">Homo sapiens</name>
    <name type="common">Human</name>
    <dbReference type="NCBI Taxonomy" id="9606"/>
    <lineage>
        <taxon>Eukaryota</taxon>
        <taxon>Metazoa</taxon>
        <taxon>Chordata</taxon>
        <taxon>Craniata</taxon>
        <taxon>Vertebrata</taxon>
        <taxon>Euteleostomi</taxon>
        <taxon>Mammalia</taxon>
        <taxon>Eutheria</taxon>
        <taxon>Euarchontoglires</taxon>
        <taxon>Primates</taxon>
        <taxon>Haplorrhini</taxon>
        <taxon>Catarrhini</taxon>
        <taxon>Hominidae</taxon>
        <taxon>Homo</taxon>
    </lineage>
</organism>